<geneLocation type="chloroplast"/>
<name>RR7_DRIWI</name>
<organism>
    <name type="scientific">Drimys winteri</name>
    <name type="common">Winter's bark</name>
    <name type="synonym">Drimys chilensis</name>
    <dbReference type="NCBI Taxonomy" id="3419"/>
    <lineage>
        <taxon>Eukaryota</taxon>
        <taxon>Viridiplantae</taxon>
        <taxon>Streptophyta</taxon>
        <taxon>Embryophyta</taxon>
        <taxon>Tracheophyta</taxon>
        <taxon>Spermatophyta</taxon>
        <taxon>Magnoliopsida</taxon>
        <taxon>Magnoliidae</taxon>
        <taxon>Canellales</taxon>
        <taxon>Winteraceae</taxon>
        <taxon>Drimys</taxon>
    </lineage>
</organism>
<proteinExistence type="inferred from homology"/>
<evidence type="ECO:0000250" key="1"/>
<evidence type="ECO:0000305" key="2"/>
<keyword id="KW-0150">Chloroplast</keyword>
<keyword id="KW-0934">Plastid</keyword>
<keyword id="KW-0687">Ribonucleoprotein</keyword>
<keyword id="KW-0689">Ribosomal protein</keyword>
<keyword id="KW-0694">RNA-binding</keyword>
<keyword id="KW-0699">rRNA-binding</keyword>
<dbReference type="EMBL" id="AF123778">
    <property type="protein sequence ID" value="AAG26113.1"/>
    <property type="molecule type" value="Genomic_DNA"/>
</dbReference>
<dbReference type="SMR" id="P69664"/>
<dbReference type="GO" id="GO:0009507">
    <property type="term" value="C:chloroplast"/>
    <property type="evidence" value="ECO:0007669"/>
    <property type="project" value="UniProtKB-SubCell"/>
</dbReference>
<dbReference type="GO" id="GO:0015935">
    <property type="term" value="C:small ribosomal subunit"/>
    <property type="evidence" value="ECO:0007669"/>
    <property type="project" value="InterPro"/>
</dbReference>
<dbReference type="GO" id="GO:0019843">
    <property type="term" value="F:rRNA binding"/>
    <property type="evidence" value="ECO:0007669"/>
    <property type="project" value="UniProtKB-UniRule"/>
</dbReference>
<dbReference type="GO" id="GO:0003735">
    <property type="term" value="F:structural constituent of ribosome"/>
    <property type="evidence" value="ECO:0007669"/>
    <property type="project" value="InterPro"/>
</dbReference>
<dbReference type="GO" id="GO:0006412">
    <property type="term" value="P:translation"/>
    <property type="evidence" value="ECO:0007669"/>
    <property type="project" value="UniProtKB-UniRule"/>
</dbReference>
<dbReference type="CDD" id="cd14871">
    <property type="entry name" value="uS7_Chloroplast"/>
    <property type="match status" value="1"/>
</dbReference>
<dbReference type="FunFam" id="1.10.455.10:FF:000001">
    <property type="entry name" value="30S ribosomal protein S7"/>
    <property type="match status" value="1"/>
</dbReference>
<dbReference type="Gene3D" id="1.10.455.10">
    <property type="entry name" value="Ribosomal protein S7 domain"/>
    <property type="match status" value="1"/>
</dbReference>
<dbReference type="HAMAP" id="MF_00480_B">
    <property type="entry name" value="Ribosomal_uS7_B"/>
    <property type="match status" value="1"/>
</dbReference>
<dbReference type="InterPro" id="IPR000235">
    <property type="entry name" value="Ribosomal_uS7"/>
</dbReference>
<dbReference type="InterPro" id="IPR005717">
    <property type="entry name" value="Ribosomal_uS7_bac/org-type"/>
</dbReference>
<dbReference type="InterPro" id="IPR020606">
    <property type="entry name" value="Ribosomal_uS7_CS"/>
</dbReference>
<dbReference type="InterPro" id="IPR023798">
    <property type="entry name" value="Ribosomal_uS7_dom"/>
</dbReference>
<dbReference type="InterPro" id="IPR036823">
    <property type="entry name" value="Ribosomal_uS7_dom_sf"/>
</dbReference>
<dbReference type="NCBIfam" id="TIGR01029">
    <property type="entry name" value="rpsG_bact"/>
    <property type="match status" value="1"/>
</dbReference>
<dbReference type="PANTHER" id="PTHR11205">
    <property type="entry name" value="RIBOSOMAL PROTEIN S7"/>
    <property type="match status" value="1"/>
</dbReference>
<dbReference type="Pfam" id="PF00177">
    <property type="entry name" value="Ribosomal_S7"/>
    <property type="match status" value="1"/>
</dbReference>
<dbReference type="PIRSF" id="PIRSF002122">
    <property type="entry name" value="RPS7p_RPS7a_RPS5e_RPS7o"/>
    <property type="match status" value="1"/>
</dbReference>
<dbReference type="SUPFAM" id="SSF47973">
    <property type="entry name" value="Ribosomal protein S7"/>
    <property type="match status" value="1"/>
</dbReference>
<dbReference type="PROSITE" id="PS00052">
    <property type="entry name" value="RIBOSOMAL_S7"/>
    <property type="match status" value="1"/>
</dbReference>
<sequence>MSRRGTAEEKTAKSDPIYRNRLVNMLVNRILKHGKKSLAYQIIYRAVKKIQQKTETNPLSVLRQAIRGVTPDIAVKARRVGGSTHQVPIEIGSTQGKALAIRWLLGASRKRPGRNMAFKLSSELVDAAKGSGDAIRKKEETHRMAEANRAFAHFR</sequence>
<accession>P69664</accession>
<accession>Q9G1K2</accession>
<feature type="chain" id="PRO_0000124452" description="Small ribosomal subunit protein uS7c">
    <location>
        <begin position="1"/>
        <end position="155"/>
    </location>
</feature>
<reference key="1">
    <citation type="journal article" date="2000" name="Am. J. Bot.">
        <title>Utility of 17 chloroplast genes for inferring the phylogeny of the basal angiosperms.</title>
        <authorList>
            <person name="Graham S.W."/>
            <person name="Olmstead R.G."/>
        </authorList>
    </citation>
    <scope>NUCLEOTIDE SEQUENCE [GENOMIC DNA]</scope>
</reference>
<comment type="function">
    <text evidence="1">One of the primary rRNA binding proteins, it binds directly to 16S rRNA where it nucleates assembly of the head domain of the 30S subunit.</text>
</comment>
<comment type="subunit">
    <text>Part of the 30S ribosomal subunit.</text>
</comment>
<comment type="subcellular location">
    <subcellularLocation>
        <location>Plastid</location>
        <location>Chloroplast</location>
    </subcellularLocation>
</comment>
<comment type="similarity">
    <text evidence="2">Belongs to the universal ribosomal protein uS7 family.</text>
</comment>
<gene>
    <name type="primary">rps7</name>
</gene>
<protein>
    <recommendedName>
        <fullName evidence="2">Small ribosomal subunit protein uS7c</fullName>
    </recommendedName>
    <alternativeName>
        <fullName>30S ribosomal protein S7, chloroplastic</fullName>
    </alternativeName>
</protein>